<sequence length="254" mass="28819">MADSKMKLHCGFIWGNSAALFCINEKGLDFELVFVDWLAGEAKTKTFLSTLNPFGEVPVLEDGDLKLFEPKAITRYLAEQYKDVGTNLLPDDPKKRAIMSMWMEVDSNQFLPIASTLIKELIINPYQGLATDDTAVQENKEKLSEVLNIYETRLGESPYLAGESFSLADLHHLAPIDYLLNTDEEELKNLIYSRPNVAAWVEKMKMRPAWLKTVVMKNHIVDLMKQRRLPIKLDSSCHESTVVAQKNAIAIENK</sequence>
<organism>
    <name type="scientific">Arabidopsis thaliana</name>
    <name type="common">Mouse-ear cress</name>
    <dbReference type="NCBI Taxonomy" id="3702"/>
    <lineage>
        <taxon>Eukaryota</taxon>
        <taxon>Viridiplantae</taxon>
        <taxon>Streptophyta</taxon>
        <taxon>Embryophyta</taxon>
        <taxon>Tracheophyta</taxon>
        <taxon>Spermatophyta</taxon>
        <taxon>Magnoliopsida</taxon>
        <taxon>eudicotyledons</taxon>
        <taxon>Gunneridae</taxon>
        <taxon>Pentapetalae</taxon>
        <taxon>rosids</taxon>
        <taxon>malvids</taxon>
        <taxon>Brassicales</taxon>
        <taxon>Brassicaceae</taxon>
        <taxon>Camelineae</taxon>
        <taxon>Arabidopsis</taxon>
    </lineage>
</organism>
<protein>
    <recommendedName>
        <fullName evidence="3">Glutathione S-transferase F14</fullName>
        <shortName evidence="3">AtGSTF14</shortName>
        <ecNumber evidence="1">2.5.1.18</ecNumber>
    </recommendedName>
    <alternativeName>
        <fullName evidence="3">GST class-phi member 14</fullName>
    </alternativeName>
</protein>
<evidence type="ECO:0000250" key="1">
    <source>
        <dbReference type="UniProtKB" id="O80852"/>
    </source>
</evidence>
<evidence type="ECO:0000255" key="2"/>
<evidence type="ECO:0000303" key="3">
    <source>
    </source>
</evidence>
<evidence type="ECO:0000305" key="4"/>
<evidence type="ECO:0000312" key="5">
    <source>
        <dbReference type="Araport" id="AT1G49860"/>
    </source>
</evidence>
<evidence type="ECO:0000312" key="6">
    <source>
        <dbReference type="EMBL" id="AAG51779.1"/>
    </source>
</evidence>
<accession>Q9C6C8</accession>
<feature type="chain" id="PRO_0000413547" description="Glutathione S-transferase F14">
    <location>
        <begin position="1"/>
        <end position="254"/>
    </location>
</feature>
<feature type="domain" description="GST N-terminal" evidence="2">
    <location>
        <begin position="4"/>
        <end position="85"/>
    </location>
</feature>
<feature type="domain" description="GST C-terminal" evidence="2">
    <location>
        <begin position="92"/>
        <end position="231"/>
    </location>
</feature>
<feature type="binding site" evidence="1">
    <location>
        <begin position="42"/>
        <end position="43"/>
    </location>
    <ligand>
        <name>glutathione</name>
        <dbReference type="ChEBI" id="CHEBI:57925"/>
    </ligand>
</feature>
<feature type="binding site" evidence="1">
    <location>
        <begin position="56"/>
        <end position="57"/>
    </location>
    <ligand>
        <name>glutathione</name>
        <dbReference type="ChEBI" id="CHEBI:57925"/>
    </ligand>
</feature>
<feature type="binding site" evidence="1">
    <location>
        <begin position="69"/>
        <end position="70"/>
    </location>
    <ligand>
        <name>glutathione</name>
        <dbReference type="ChEBI" id="CHEBI:57925"/>
    </ligand>
</feature>
<proteinExistence type="evidence at transcript level"/>
<comment type="function">
    <text evidence="1">May be involved in the conjugation of reduced glutathione to a wide number of exogenous and endogenous hydrophobic electrophiles and have a detoxification role against certain herbicides.</text>
</comment>
<comment type="catalytic activity">
    <reaction evidence="1">
        <text>RX + glutathione = an S-substituted glutathione + a halide anion + H(+)</text>
        <dbReference type="Rhea" id="RHEA:16437"/>
        <dbReference type="ChEBI" id="CHEBI:15378"/>
        <dbReference type="ChEBI" id="CHEBI:16042"/>
        <dbReference type="ChEBI" id="CHEBI:17792"/>
        <dbReference type="ChEBI" id="CHEBI:57925"/>
        <dbReference type="ChEBI" id="CHEBI:90779"/>
        <dbReference type="EC" id="2.5.1.18"/>
    </reaction>
</comment>
<comment type="subcellular location">
    <subcellularLocation>
        <location evidence="4">Cytoplasm</location>
        <location evidence="4">Cytosol</location>
    </subcellularLocation>
</comment>
<comment type="similarity">
    <text evidence="4">Belongs to the GST superfamily. Phi family.</text>
</comment>
<name>GSTFE_ARATH</name>
<reference key="1">
    <citation type="journal article" date="2000" name="Nature">
        <title>Sequence and analysis of chromosome 1 of the plant Arabidopsis thaliana.</title>
        <authorList>
            <person name="Theologis A."/>
            <person name="Ecker J.R."/>
            <person name="Palm C.J."/>
            <person name="Federspiel N.A."/>
            <person name="Kaul S."/>
            <person name="White O."/>
            <person name="Alonso J."/>
            <person name="Altafi H."/>
            <person name="Araujo R."/>
            <person name="Bowman C.L."/>
            <person name="Brooks S.Y."/>
            <person name="Buehler E."/>
            <person name="Chan A."/>
            <person name="Chao Q."/>
            <person name="Chen H."/>
            <person name="Cheuk R.F."/>
            <person name="Chin C.W."/>
            <person name="Chung M.K."/>
            <person name="Conn L."/>
            <person name="Conway A.B."/>
            <person name="Conway A.R."/>
            <person name="Creasy T.H."/>
            <person name="Dewar K."/>
            <person name="Dunn P."/>
            <person name="Etgu P."/>
            <person name="Feldblyum T.V."/>
            <person name="Feng J.-D."/>
            <person name="Fong B."/>
            <person name="Fujii C.Y."/>
            <person name="Gill J.E."/>
            <person name="Goldsmith A.D."/>
            <person name="Haas B."/>
            <person name="Hansen N.F."/>
            <person name="Hughes B."/>
            <person name="Huizar L."/>
            <person name="Hunter J.L."/>
            <person name="Jenkins J."/>
            <person name="Johnson-Hopson C."/>
            <person name="Khan S."/>
            <person name="Khaykin E."/>
            <person name="Kim C.J."/>
            <person name="Koo H.L."/>
            <person name="Kremenetskaia I."/>
            <person name="Kurtz D.B."/>
            <person name="Kwan A."/>
            <person name="Lam B."/>
            <person name="Langin-Hooper S."/>
            <person name="Lee A."/>
            <person name="Lee J.M."/>
            <person name="Lenz C.A."/>
            <person name="Li J.H."/>
            <person name="Li Y.-P."/>
            <person name="Lin X."/>
            <person name="Liu S.X."/>
            <person name="Liu Z.A."/>
            <person name="Luros J.S."/>
            <person name="Maiti R."/>
            <person name="Marziali A."/>
            <person name="Militscher J."/>
            <person name="Miranda M."/>
            <person name="Nguyen M."/>
            <person name="Nierman W.C."/>
            <person name="Osborne B.I."/>
            <person name="Pai G."/>
            <person name="Peterson J."/>
            <person name="Pham P.K."/>
            <person name="Rizzo M."/>
            <person name="Rooney T."/>
            <person name="Rowley D."/>
            <person name="Sakano H."/>
            <person name="Salzberg S.L."/>
            <person name="Schwartz J.R."/>
            <person name="Shinn P."/>
            <person name="Southwick A.M."/>
            <person name="Sun H."/>
            <person name="Tallon L.J."/>
            <person name="Tambunga G."/>
            <person name="Toriumi M.J."/>
            <person name="Town C.D."/>
            <person name="Utterback T."/>
            <person name="Van Aken S."/>
            <person name="Vaysberg M."/>
            <person name="Vysotskaia V.S."/>
            <person name="Walker M."/>
            <person name="Wu D."/>
            <person name="Yu G."/>
            <person name="Fraser C.M."/>
            <person name="Venter J.C."/>
            <person name="Davis R.W."/>
        </authorList>
    </citation>
    <scope>NUCLEOTIDE SEQUENCE [LARGE SCALE GENOMIC DNA]</scope>
    <source>
        <strain>cv. Columbia</strain>
    </source>
</reference>
<reference key="2">
    <citation type="journal article" date="2017" name="Plant J.">
        <title>Araport11: a complete reannotation of the Arabidopsis thaliana reference genome.</title>
        <authorList>
            <person name="Cheng C.Y."/>
            <person name="Krishnakumar V."/>
            <person name="Chan A.P."/>
            <person name="Thibaud-Nissen F."/>
            <person name="Schobel S."/>
            <person name="Town C.D."/>
        </authorList>
    </citation>
    <scope>GENOME REANNOTATION</scope>
    <source>
        <strain>cv. Columbia</strain>
    </source>
</reference>
<reference key="3">
    <citation type="journal article" date="2003" name="Science">
        <title>Empirical analysis of transcriptional activity in the Arabidopsis genome.</title>
        <authorList>
            <person name="Yamada K."/>
            <person name="Lim J."/>
            <person name="Dale J.M."/>
            <person name="Chen H."/>
            <person name="Shinn P."/>
            <person name="Palm C.J."/>
            <person name="Southwick A.M."/>
            <person name="Wu H.C."/>
            <person name="Kim C.J."/>
            <person name="Nguyen M."/>
            <person name="Pham P.K."/>
            <person name="Cheuk R.F."/>
            <person name="Karlin-Newmann G."/>
            <person name="Liu S.X."/>
            <person name="Lam B."/>
            <person name="Sakano H."/>
            <person name="Wu T."/>
            <person name="Yu G."/>
            <person name="Miranda M."/>
            <person name="Quach H.L."/>
            <person name="Tripp M."/>
            <person name="Chang C.H."/>
            <person name="Lee J.M."/>
            <person name="Toriumi M.J."/>
            <person name="Chan M.M."/>
            <person name="Tang C.C."/>
            <person name="Onodera C.S."/>
            <person name="Deng J.M."/>
            <person name="Akiyama K."/>
            <person name="Ansari Y."/>
            <person name="Arakawa T."/>
            <person name="Banh J."/>
            <person name="Banno F."/>
            <person name="Bowser L."/>
            <person name="Brooks S.Y."/>
            <person name="Carninci P."/>
            <person name="Chao Q."/>
            <person name="Choy N."/>
            <person name="Enju A."/>
            <person name="Goldsmith A.D."/>
            <person name="Gurjal M."/>
            <person name="Hansen N.F."/>
            <person name="Hayashizaki Y."/>
            <person name="Johnson-Hopson C."/>
            <person name="Hsuan V.W."/>
            <person name="Iida K."/>
            <person name="Karnes M."/>
            <person name="Khan S."/>
            <person name="Koesema E."/>
            <person name="Ishida J."/>
            <person name="Jiang P.X."/>
            <person name="Jones T."/>
            <person name="Kawai J."/>
            <person name="Kamiya A."/>
            <person name="Meyers C."/>
            <person name="Nakajima M."/>
            <person name="Narusaka M."/>
            <person name="Seki M."/>
            <person name="Sakurai T."/>
            <person name="Satou M."/>
            <person name="Tamse R."/>
            <person name="Vaysberg M."/>
            <person name="Wallender E.K."/>
            <person name="Wong C."/>
            <person name="Yamamura Y."/>
            <person name="Yuan S."/>
            <person name="Shinozaki K."/>
            <person name="Davis R.W."/>
            <person name="Theologis A."/>
            <person name="Ecker J.R."/>
        </authorList>
    </citation>
    <scope>NUCLEOTIDE SEQUENCE [LARGE SCALE MRNA]</scope>
    <source>
        <strain>cv. Columbia</strain>
    </source>
</reference>
<reference key="4">
    <citation type="journal article" date="2002" name="Plant Mol. Biol.">
        <title>Probing the diversity of the Arabidopsis glutathione S-transferase gene family.</title>
        <authorList>
            <person name="Wagner U."/>
            <person name="Edwards R."/>
            <person name="Dixon D.P."/>
            <person name="Mauch F."/>
        </authorList>
    </citation>
    <scope>GENE FAMILY</scope>
    <scope>NOMENCLATURE</scope>
</reference>
<dbReference type="EC" id="2.5.1.18" evidence="1"/>
<dbReference type="EMBL" id="AC079674">
    <property type="protein sequence ID" value="AAG51779.1"/>
    <property type="molecule type" value="Genomic_DNA"/>
</dbReference>
<dbReference type="EMBL" id="CP002684">
    <property type="protein sequence ID" value="AEE32484.1"/>
    <property type="molecule type" value="Genomic_DNA"/>
</dbReference>
<dbReference type="EMBL" id="BT010408">
    <property type="protein sequence ID" value="AAQ62409.1"/>
    <property type="molecule type" value="mRNA"/>
</dbReference>
<dbReference type="EMBL" id="AK176306">
    <property type="protein sequence ID" value="BAD44069.1"/>
    <property type="molecule type" value="mRNA"/>
</dbReference>
<dbReference type="PIR" id="E96535">
    <property type="entry name" value="E96535"/>
</dbReference>
<dbReference type="RefSeq" id="NP_175408.1">
    <property type="nucleotide sequence ID" value="NM_103873.5"/>
</dbReference>
<dbReference type="SMR" id="Q9C6C8"/>
<dbReference type="BioGRID" id="26634">
    <property type="interactions" value="1"/>
</dbReference>
<dbReference type="FunCoup" id="Q9C6C8">
    <property type="interactions" value="550"/>
</dbReference>
<dbReference type="IntAct" id="Q9C6C8">
    <property type="interactions" value="1"/>
</dbReference>
<dbReference type="STRING" id="3702.Q9C6C8"/>
<dbReference type="PaxDb" id="3702-AT1G49860.1"/>
<dbReference type="ProteomicsDB" id="247189"/>
<dbReference type="EnsemblPlants" id="AT1G49860.1">
    <property type="protein sequence ID" value="AT1G49860.1"/>
    <property type="gene ID" value="AT1G49860"/>
</dbReference>
<dbReference type="GeneID" id="841409"/>
<dbReference type="Gramene" id="AT1G49860.1">
    <property type="protein sequence ID" value="AT1G49860.1"/>
    <property type="gene ID" value="AT1G49860"/>
</dbReference>
<dbReference type="KEGG" id="ath:AT1G49860"/>
<dbReference type="Araport" id="AT1G49860"/>
<dbReference type="TAIR" id="AT1G49860">
    <property type="gene designation" value="GSTF14"/>
</dbReference>
<dbReference type="eggNOG" id="KOG0867">
    <property type="taxonomic scope" value="Eukaryota"/>
</dbReference>
<dbReference type="HOGENOM" id="CLU_011226_5_4_1"/>
<dbReference type="InParanoid" id="Q9C6C8"/>
<dbReference type="OMA" id="MKNHIVD"/>
<dbReference type="PhylomeDB" id="Q9C6C8"/>
<dbReference type="BioCyc" id="ARA:AT1G49860-MONOMER"/>
<dbReference type="PRO" id="PR:Q9C6C8"/>
<dbReference type="Proteomes" id="UP000006548">
    <property type="component" value="Chromosome 1"/>
</dbReference>
<dbReference type="ExpressionAtlas" id="Q9C6C8">
    <property type="expression patterns" value="baseline and differential"/>
</dbReference>
<dbReference type="GO" id="GO:0005737">
    <property type="term" value="C:cytoplasm"/>
    <property type="evidence" value="ECO:0000303"/>
    <property type="project" value="TAIR"/>
</dbReference>
<dbReference type="GO" id="GO:0005829">
    <property type="term" value="C:cytosol"/>
    <property type="evidence" value="ECO:0007669"/>
    <property type="project" value="UniProtKB-SubCell"/>
</dbReference>
<dbReference type="GO" id="GO:0004364">
    <property type="term" value="F:glutathione transferase activity"/>
    <property type="evidence" value="ECO:0007669"/>
    <property type="project" value="UniProtKB-EC"/>
</dbReference>
<dbReference type="GO" id="GO:0009407">
    <property type="term" value="P:toxin catabolic process"/>
    <property type="evidence" value="ECO:0000304"/>
    <property type="project" value="TAIR"/>
</dbReference>
<dbReference type="CDD" id="cd03187">
    <property type="entry name" value="GST_C_Phi"/>
    <property type="match status" value="1"/>
</dbReference>
<dbReference type="CDD" id="cd03053">
    <property type="entry name" value="GST_N_Phi"/>
    <property type="match status" value="1"/>
</dbReference>
<dbReference type="FunFam" id="3.40.30.10:FF:000039">
    <property type="entry name" value="Glutathione S-transferase domain"/>
    <property type="match status" value="1"/>
</dbReference>
<dbReference type="FunFam" id="1.20.1050.10:FF:000004">
    <property type="entry name" value="Glutathione S-transferase F2"/>
    <property type="match status" value="1"/>
</dbReference>
<dbReference type="Gene3D" id="1.20.1050.10">
    <property type="match status" value="1"/>
</dbReference>
<dbReference type="Gene3D" id="3.40.30.10">
    <property type="entry name" value="Glutaredoxin"/>
    <property type="match status" value="1"/>
</dbReference>
<dbReference type="InterPro" id="IPR010987">
    <property type="entry name" value="Glutathione-S-Trfase_C-like"/>
</dbReference>
<dbReference type="InterPro" id="IPR036282">
    <property type="entry name" value="Glutathione-S-Trfase_C_sf"/>
</dbReference>
<dbReference type="InterPro" id="IPR040079">
    <property type="entry name" value="Glutathione_S-Trfase"/>
</dbReference>
<dbReference type="InterPro" id="IPR004045">
    <property type="entry name" value="Glutathione_S-Trfase_N"/>
</dbReference>
<dbReference type="InterPro" id="IPR004046">
    <property type="entry name" value="GST_C"/>
</dbReference>
<dbReference type="InterPro" id="IPR034347">
    <property type="entry name" value="GST_Phi_C"/>
</dbReference>
<dbReference type="InterPro" id="IPR036249">
    <property type="entry name" value="Thioredoxin-like_sf"/>
</dbReference>
<dbReference type="PANTHER" id="PTHR43900:SF43">
    <property type="entry name" value="GLUTATHIONE S-TRANSFERASE F14"/>
    <property type="match status" value="1"/>
</dbReference>
<dbReference type="PANTHER" id="PTHR43900">
    <property type="entry name" value="GLUTATHIONE S-TRANSFERASE RHO"/>
    <property type="match status" value="1"/>
</dbReference>
<dbReference type="Pfam" id="PF00043">
    <property type="entry name" value="GST_C"/>
    <property type="match status" value="1"/>
</dbReference>
<dbReference type="Pfam" id="PF02798">
    <property type="entry name" value="GST_N"/>
    <property type="match status" value="1"/>
</dbReference>
<dbReference type="SFLD" id="SFLDS00019">
    <property type="entry name" value="Glutathione_Transferase_(cytos"/>
    <property type="match status" value="1"/>
</dbReference>
<dbReference type="SFLD" id="SFLDG00358">
    <property type="entry name" value="Main_(cytGST)"/>
    <property type="match status" value="1"/>
</dbReference>
<dbReference type="SUPFAM" id="SSF47616">
    <property type="entry name" value="GST C-terminal domain-like"/>
    <property type="match status" value="1"/>
</dbReference>
<dbReference type="SUPFAM" id="SSF52833">
    <property type="entry name" value="Thioredoxin-like"/>
    <property type="match status" value="1"/>
</dbReference>
<dbReference type="PROSITE" id="PS50405">
    <property type="entry name" value="GST_CTER"/>
    <property type="match status" value="1"/>
</dbReference>
<dbReference type="PROSITE" id="PS50404">
    <property type="entry name" value="GST_NTER"/>
    <property type="match status" value="1"/>
</dbReference>
<gene>
    <name evidence="3" type="primary">GSTF14</name>
    <name evidence="5" type="ordered locus">At1g49860</name>
    <name evidence="6" type="ORF">F10F5.9</name>
</gene>
<keyword id="KW-0963">Cytoplasm</keyword>
<keyword id="KW-0216">Detoxification</keyword>
<keyword id="KW-1185">Reference proteome</keyword>
<keyword id="KW-0808">Transferase</keyword>